<accession>Q92097</accession>
<proteinExistence type="inferred from homology"/>
<reference key="1">
    <citation type="journal article" date="1992" name="Mol. Cell. Endocrinol.">
        <title>The Atlantic salmon prepro-gonadotropin releasing hormone gene and mRNA.</title>
        <authorList>
            <person name="Klungland H."/>
            <person name="Lorens J.B."/>
            <person name="Andersen O."/>
            <person name="Kisen G.O."/>
            <person name="Alestroem P."/>
        </authorList>
    </citation>
    <scope>NUCLEOTIDE SEQUENCE [GENOMIC DNA]</scope>
    <source>
        <tissue>Muscle</tissue>
    </source>
</reference>
<keyword id="KW-0027">Amidation</keyword>
<keyword id="KW-0165">Cleavage on pair of basic residues</keyword>
<keyword id="KW-0372">Hormone</keyword>
<keyword id="KW-0873">Pyrrolidone carboxylic acid</keyword>
<keyword id="KW-1185">Reference proteome</keyword>
<keyword id="KW-0964">Secreted</keyword>
<keyword id="KW-0732">Signal</keyword>
<feature type="signal peptide" evidence="1">
    <location>
        <begin position="1" status="less than"/>
        <end position="15"/>
    </location>
</feature>
<feature type="chain" id="PRO_0000012517" description="Progonadoliberin-3">
    <location>
        <begin position="16"/>
        <end position="74"/>
    </location>
</feature>
<feature type="peptide" id="PRO_0000012518" description="Gonadoliberin-3">
    <location>
        <begin position="16"/>
        <end position="25"/>
    </location>
</feature>
<feature type="peptide" id="PRO_0000012519" description="GnRH-associated peptide 3">
    <location>
        <begin position="29"/>
        <end position="74"/>
    </location>
</feature>
<feature type="modified residue" description="Pyrrolidone carboxylic acid" evidence="2">
    <location>
        <position position="16"/>
    </location>
</feature>
<feature type="modified residue" description="Glycine amide" evidence="2">
    <location>
        <position position="25"/>
    </location>
</feature>
<feature type="non-terminal residue">
    <location>
        <position position="1"/>
    </location>
</feature>
<dbReference type="EMBL" id="X79711">
    <property type="protein sequence ID" value="CAA56150.1"/>
    <property type="molecule type" value="Genomic_DNA"/>
</dbReference>
<dbReference type="PIR" id="I51092">
    <property type="entry name" value="I51092"/>
</dbReference>
<dbReference type="Proteomes" id="UP000694402">
    <property type="component" value="Unplaced"/>
</dbReference>
<dbReference type="GO" id="GO:0005615">
    <property type="term" value="C:extracellular space"/>
    <property type="evidence" value="ECO:0000250"/>
    <property type="project" value="UniProtKB"/>
</dbReference>
<dbReference type="GO" id="GO:0005183">
    <property type="term" value="F:gonadotropin hormone-releasing hormone activity"/>
    <property type="evidence" value="ECO:0007669"/>
    <property type="project" value="TreeGrafter"/>
</dbReference>
<dbReference type="GO" id="GO:0031530">
    <property type="term" value="F:gonadotropin-releasing hormone receptor binding"/>
    <property type="evidence" value="ECO:0007669"/>
    <property type="project" value="TreeGrafter"/>
</dbReference>
<dbReference type="InterPro" id="IPR002012">
    <property type="entry name" value="GnRH"/>
</dbReference>
<dbReference type="InterPro" id="IPR019792">
    <property type="entry name" value="Gonadoliberin"/>
</dbReference>
<dbReference type="PANTHER" id="PTHR10522">
    <property type="entry name" value="GONADOLIBERIN"/>
    <property type="match status" value="1"/>
</dbReference>
<dbReference type="PANTHER" id="PTHR10522:SF6">
    <property type="entry name" value="PROGONADOLIBERIN-2"/>
    <property type="match status" value="1"/>
</dbReference>
<dbReference type="Pfam" id="PF00446">
    <property type="entry name" value="GnRH"/>
    <property type="match status" value="1"/>
</dbReference>
<dbReference type="PROSITE" id="PS00473">
    <property type="entry name" value="GNRH"/>
    <property type="match status" value="1"/>
</dbReference>
<sequence>VRVVVLALVAQVTLSQHWSYGWLPGGKRSVGELEATIKMMDTGGVVALPEETSAHVSERLRPYDVILKKWMPHK</sequence>
<name>GON3_ONCTS</name>
<gene>
    <name type="primary">gnrh3</name>
</gene>
<protein>
    <recommendedName>
        <fullName>Progonadoliberin-3</fullName>
    </recommendedName>
    <alternativeName>
        <fullName>Progonadoliberin III</fullName>
    </alternativeName>
    <component>
        <recommendedName>
            <fullName>Gonadoliberin-3</fullName>
        </recommendedName>
        <alternativeName>
            <fullName>Gonadoliberin III</fullName>
        </alternativeName>
        <alternativeName>
            <fullName>Gonadotropin-releasing hormone III</fullName>
            <shortName>GnRH III</shortName>
        </alternativeName>
        <alternativeName>
            <fullName>Luliberin III</fullName>
        </alternativeName>
        <alternativeName>
            <fullName>Luteinizing hormone-releasing hormone III</fullName>
            <shortName>LH-RH III</shortName>
        </alternativeName>
    </component>
    <component>
        <recommendedName>
            <fullName>GnRH-associated peptide 3</fullName>
        </recommendedName>
        <alternativeName>
            <fullName>GnRH-associated peptide III</fullName>
        </alternativeName>
    </component>
</protein>
<comment type="function">
    <text>Stimulates the secretion of gonadotropins.</text>
</comment>
<comment type="subcellular location">
    <subcellularLocation>
        <location>Secreted</location>
    </subcellularLocation>
</comment>
<comment type="similarity">
    <text evidence="3">Belongs to the GnRH family.</text>
</comment>
<organism>
    <name type="scientific">Oncorhynchus tshawytscha</name>
    <name type="common">Chinook salmon</name>
    <name type="synonym">Salmo tshawytscha</name>
    <dbReference type="NCBI Taxonomy" id="74940"/>
    <lineage>
        <taxon>Eukaryota</taxon>
        <taxon>Metazoa</taxon>
        <taxon>Chordata</taxon>
        <taxon>Craniata</taxon>
        <taxon>Vertebrata</taxon>
        <taxon>Euteleostomi</taxon>
        <taxon>Actinopterygii</taxon>
        <taxon>Neopterygii</taxon>
        <taxon>Teleostei</taxon>
        <taxon>Protacanthopterygii</taxon>
        <taxon>Salmoniformes</taxon>
        <taxon>Salmonidae</taxon>
        <taxon>Salmoninae</taxon>
        <taxon>Oncorhynchus</taxon>
    </lineage>
</organism>
<evidence type="ECO:0000250" key="1"/>
<evidence type="ECO:0000250" key="2">
    <source>
        <dbReference type="UniProtKB" id="P69105"/>
    </source>
</evidence>
<evidence type="ECO:0000305" key="3"/>